<gene>
    <name evidence="2" type="primary">hda</name>
    <name type="ordered locus">SEN2477</name>
</gene>
<comment type="function">
    <text evidence="1">Mediates the interaction of DNA replication initiator protein DnaA with DNA polymerase subunit beta sliding clamp (dnaN). Stimulates hydrolysis of ATP-DnaA to ADP-DnaA, rendering DnaA inactive for reinitiation, a process called regulatory inhibition of DnaA or RIDA (By similarity).</text>
</comment>
<comment type="subunit">
    <text evidence="2">The active form seems to be an ADP-bound monomer. Forms the RIDA complex (regulatory inactivation of DnaA) of ATP-DnaA, ADP-Hda and the DNA-loaded beta sliding clamp (dnaN).</text>
</comment>
<comment type="similarity">
    <text evidence="2">Belongs to the DnaA family. HdA subfamily.</text>
</comment>
<name>HDA_SALEP</name>
<dbReference type="EMBL" id="AM933172">
    <property type="protein sequence ID" value="CAR34062.1"/>
    <property type="molecule type" value="Genomic_DNA"/>
</dbReference>
<dbReference type="SMR" id="B5R558"/>
<dbReference type="KEGG" id="set:SEN2477"/>
<dbReference type="HOGENOM" id="CLU_072265_1_1_6"/>
<dbReference type="Proteomes" id="UP000000613">
    <property type="component" value="Chromosome"/>
</dbReference>
<dbReference type="GO" id="GO:0006270">
    <property type="term" value="P:DNA replication initiation"/>
    <property type="evidence" value="ECO:0007669"/>
    <property type="project" value="TreeGrafter"/>
</dbReference>
<dbReference type="GO" id="GO:0032297">
    <property type="term" value="P:negative regulation of DNA-templated DNA replication initiation"/>
    <property type="evidence" value="ECO:0007669"/>
    <property type="project" value="InterPro"/>
</dbReference>
<dbReference type="FunFam" id="1.10.8.60:FF:000024">
    <property type="entry name" value="DnaA regulatory inactivator Hda"/>
    <property type="match status" value="1"/>
</dbReference>
<dbReference type="FunFam" id="3.40.50.300:FF:000452">
    <property type="entry name" value="DnaA regulatory inactivator Hda"/>
    <property type="match status" value="1"/>
</dbReference>
<dbReference type="Gene3D" id="1.10.8.60">
    <property type="match status" value="1"/>
</dbReference>
<dbReference type="Gene3D" id="3.40.50.300">
    <property type="entry name" value="P-loop containing nucleotide triphosphate hydrolases"/>
    <property type="match status" value="1"/>
</dbReference>
<dbReference type="HAMAP" id="MF_01158">
    <property type="entry name" value="Hda"/>
    <property type="match status" value="1"/>
</dbReference>
<dbReference type="InterPro" id="IPR020591">
    <property type="entry name" value="Chromosome_initiator_DnaA-like"/>
</dbReference>
<dbReference type="InterPro" id="IPR013317">
    <property type="entry name" value="DnaA_dom"/>
</dbReference>
<dbReference type="InterPro" id="IPR017788">
    <property type="entry name" value="Hda"/>
</dbReference>
<dbReference type="InterPro" id="IPR022864">
    <property type="entry name" value="Hda_Enterobact"/>
</dbReference>
<dbReference type="InterPro" id="IPR055199">
    <property type="entry name" value="Hda_lid"/>
</dbReference>
<dbReference type="InterPro" id="IPR027417">
    <property type="entry name" value="P-loop_NTPase"/>
</dbReference>
<dbReference type="NCBIfam" id="TIGR03420">
    <property type="entry name" value="DnaA_homol_Hda"/>
    <property type="match status" value="1"/>
</dbReference>
<dbReference type="NCBIfam" id="NF005982">
    <property type="entry name" value="PRK08084.1"/>
    <property type="match status" value="1"/>
</dbReference>
<dbReference type="PANTHER" id="PTHR30050">
    <property type="entry name" value="CHROMOSOMAL REPLICATION INITIATOR PROTEIN DNAA"/>
    <property type="match status" value="1"/>
</dbReference>
<dbReference type="PANTHER" id="PTHR30050:SF5">
    <property type="entry name" value="DNAA REGULATORY INACTIVATOR HDA"/>
    <property type="match status" value="1"/>
</dbReference>
<dbReference type="Pfam" id="PF00308">
    <property type="entry name" value="Bac_DnaA"/>
    <property type="match status" value="1"/>
</dbReference>
<dbReference type="Pfam" id="PF22688">
    <property type="entry name" value="Hda_lid"/>
    <property type="match status" value="1"/>
</dbReference>
<dbReference type="PRINTS" id="PR00051">
    <property type="entry name" value="DNAA"/>
</dbReference>
<dbReference type="SUPFAM" id="SSF52540">
    <property type="entry name" value="P-loop containing nucleoside triphosphate hydrolases"/>
    <property type="match status" value="1"/>
</dbReference>
<reference key="1">
    <citation type="journal article" date="2008" name="Genome Res.">
        <title>Comparative genome analysis of Salmonella enteritidis PT4 and Salmonella gallinarum 287/91 provides insights into evolutionary and host adaptation pathways.</title>
        <authorList>
            <person name="Thomson N.R."/>
            <person name="Clayton D.J."/>
            <person name="Windhorst D."/>
            <person name="Vernikos G."/>
            <person name="Davidson S."/>
            <person name="Churcher C."/>
            <person name="Quail M.A."/>
            <person name="Stevens M."/>
            <person name="Jones M.A."/>
            <person name="Watson M."/>
            <person name="Barron A."/>
            <person name="Layton A."/>
            <person name="Pickard D."/>
            <person name="Kingsley R.A."/>
            <person name="Bignell A."/>
            <person name="Clark L."/>
            <person name="Harris B."/>
            <person name="Ormond D."/>
            <person name="Abdellah Z."/>
            <person name="Brooks K."/>
            <person name="Cherevach I."/>
            <person name="Chillingworth T."/>
            <person name="Woodward J."/>
            <person name="Norberczak H."/>
            <person name="Lord A."/>
            <person name="Arrowsmith C."/>
            <person name="Jagels K."/>
            <person name="Moule S."/>
            <person name="Mungall K."/>
            <person name="Saunders M."/>
            <person name="Whitehead S."/>
            <person name="Chabalgoity J.A."/>
            <person name="Maskell D."/>
            <person name="Humphreys T."/>
            <person name="Roberts M."/>
            <person name="Barrow P.A."/>
            <person name="Dougan G."/>
            <person name="Parkhill J."/>
        </authorList>
    </citation>
    <scope>NUCLEOTIDE SEQUENCE [LARGE SCALE GENOMIC DNA]</scope>
    <source>
        <strain>P125109</strain>
    </source>
</reference>
<evidence type="ECO:0000250" key="1"/>
<evidence type="ECO:0000255" key="2">
    <source>
        <dbReference type="HAMAP-Rule" id="MF_01158"/>
    </source>
</evidence>
<accession>B5R558</accession>
<sequence length="241" mass="27472">MSSWVEVSLNTPAQLSLPLYLPDDETFASFWPGDNASLLAALQNVLRQEHSGYIYLWAREGAGRSHLLHAACAELSQRGDAVGYVPLDKRTWFVPEVLDGMEHLSLVCIDNIECVAGDELWEMAIFDLYNRILESGKTRLLITGDRPPRQLNLGLPDLASRLDWGQIYKLQPLSDEDKLQALQLRARLRGFELPEDVGRFLLKRLDREMRTLFMTLDQLDHASITAQRKLTIPFVKEILKL</sequence>
<organism>
    <name type="scientific">Salmonella enteritidis PT4 (strain P125109)</name>
    <dbReference type="NCBI Taxonomy" id="550537"/>
    <lineage>
        <taxon>Bacteria</taxon>
        <taxon>Pseudomonadati</taxon>
        <taxon>Pseudomonadota</taxon>
        <taxon>Gammaproteobacteria</taxon>
        <taxon>Enterobacterales</taxon>
        <taxon>Enterobacteriaceae</taxon>
        <taxon>Salmonella</taxon>
    </lineage>
</organism>
<protein>
    <recommendedName>
        <fullName evidence="2">DnaA regulatory inactivator Hda</fullName>
    </recommendedName>
</protein>
<proteinExistence type="inferred from homology"/>
<keyword id="KW-0235">DNA replication</keyword>
<keyword id="KW-0236">DNA replication inhibitor</keyword>
<feature type="chain" id="PRO_1000137818" description="DnaA regulatory inactivator Hda">
    <location>
        <begin position="1"/>
        <end position="241"/>
    </location>
</feature>